<feature type="chain" id="PRO_0000411776" description="Probable Xaa-Pro aminopeptidase P">
    <location>
        <begin position="1"/>
        <end position="635"/>
    </location>
</feature>
<feature type="binding site" evidence="1">
    <location>
        <position position="432"/>
    </location>
    <ligand>
        <name>Mn(2+)</name>
        <dbReference type="ChEBI" id="CHEBI:29035"/>
        <label>2</label>
    </ligand>
</feature>
<feature type="binding site" evidence="1">
    <location>
        <position position="443"/>
    </location>
    <ligand>
        <name>Mn(2+)</name>
        <dbReference type="ChEBI" id="CHEBI:29035"/>
        <label>1</label>
    </ligand>
</feature>
<feature type="binding site" evidence="1">
    <location>
        <position position="443"/>
    </location>
    <ligand>
        <name>Mn(2+)</name>
        <dbReference type="ChEBI" id="CHEBI:29035"/>
        <label>2</label>
    </ligand>
</feature>
<feature type="binding site" evidence="1">
    <location>
        <position position="541"/>
    </location>
    <ligand>
        <name>Mn(2+)</name>
        <dbReference type="ChEBI" id="CHEBI:29035"/>
        <label>1</label>
    </ligand>
</feature>
<feature type="binding site" evidence="1">
    <location>
        <position position="555"/>
    </location>
    <ligand>
        <name>Mn(2+)</name>
        <dbReference type="ChEBI" id="CHEBI:29035"/>
        <label>1</label>
    </ligand>
</feature>
<feature type="binding site" evidence="1">
    <location>
        <position position="555"/>
    </location>
    <ligand>
        <name>Mn(2+)</name>
        <dbReference type="ChEBI" id="CHEBI:29035"/>
        <label>2</label>
    </ligand>
</feature>
<proteinExistence type="inferred from homology"/>
<reference key="1">
    <citation type="journal article" date="2012" name="MBio">
        <title>Comparative genome analysis of Trichophyton rubrum and related dermatophytes reveals candidate genes involved in infection.</title>
        <authorList>
            <person name="Martinez D.A."/>
            <person name="Oliver B.G."/>
            <person name="Graeser Y."/>
            <person name="Goldberg J.M."/>
            <person name="Li W."/>
            <person name="Martinez-Rossi N.M."/>
            <person name="Monod M."/>
            <person name="Shelest E."/>
            <person name="Barton R.C."/>
            <person name="Birch E."/>
            <person name="Brakhage A.A."/>
            <person name="Chen Z."/>
            <person name="Gurr S.J."/>
            <person name="Heiman D."/>
            <person name="Heitman J."/>
            <person name="Kosti I."/>
            <person name="Rossi A."/>
            <person name="Saif S."/>
            <person name="Samalova M."/>
            <person name="Saunders C.W."/>
            <person name="Shea T."/>
            <person name="Summerbell R.C."/>
            <person name="Xu J."/>
            <person name="Young S."/>
            <person name="Zeng Q."/>
            <person name="Birren B.W."/>
            <person name="Cuomo C.A."/>
            <person name="White T.C."/>
        </authorList>
    </citation>
    <scope>NUCLEOTIDE SEQUENCE [LARGE SCALE GENOMIC DNA]</scope>
    <source>
        <strain>ATCC MYA-4604 / CBS 118893</strain>
    </source>
</reference>
<keyword id="KW-0031">Aminopeptidase</keyword>
<keyword id="KW-0378">Hydrolase</keyword>
<keyword id="KW-0464">Manganese</keyword>
<keyword id="KW-0479">Metal-binding</keyword>
<keyword id="KW-0482">Metalloprotease</keyword>
<keyword id="KW-0645">Protease</keyword>
<keyword id="KW-1185">Reference proteome</keyword>
<comment type="function">
    <text evidence="1">Catalyzes the removal of a penultimate prolyl residue from the N-termini of peptides.</text>
</comment>
<comment type="catalytic activity">
    <reaction>
        <text>Release of any N-terminal amino acid, including proline, that is linked to proline, even from a dipeptide or tripeptide.</text>
        <dbReference type="EC" id="3.4.11.9"/>
    </reaction>
</comment>
<comment type="cofactor">
    <cofactor evidence="1">
        <name>Mn(2+)</name>
        <dbReference type="ChEBI" id="CHEBI:29035"/>
    </cofactor>
    <text evidence="1">Binds 2 manganese ions per subunit.</text>
</comment>
<comment type="similarity">
    <text evidence="2">Belongs to the peptidase M24B family.</text>
</comment>
<dbReference type="EC" id="3.4.11.9"/>
<dbReference type="EMBL" id="DS989824">
    <property type="protein sequence ID" value="EFR01339.1"/>
    <property type="molecule type" value="Genomic_DNA"/>
</dbReference>
<dbReference type="RefSeq" id="XP_003174169.1">
    <property type="nucleotide sequence ID" value="XM_003174121.1"/>
</dbReference>
<dbReference type="SMR" id="E4USI8"/>
<dbReference type="FunCoup" id="E4USI8">
    <property type="interactions" value="382"/>
</dbReference>
<dbReference type="STRING" id="535722.E4USI8"/>
<dbReference type="GeneID" id="10029458"/>
<dbReference type="VEuPathDB" id="FungiDB:MGYG_04346"/>
<dbReference type="eggNOG" id="KOG2413">
    <property type="taxonomic scope" value="Eukaryota"/>
</dbReference>
<dbReference type="HOGENOM" id="CLU_011781_2_1_1"/>
<dbReference type="InParanoid" id="E4USI8"/>
<dbReference type="OMA" id="EPGMILS"/>
<dbReference type="OrthoDB" id="9995434at2759"/>
<dbReference type="Proteomes" id="UP000002669">
    <property type="component" value="Unassembled WGS sequence"/>
</dbReference>
<dbReference type="GO" id="GO:0005737">
    <property type="term" value="C:cytoplasm"/>
    <property type="evidence" value="ECO:0007669"/>
    <property type="project" value="UniProtKB-ARBA"/>
</dbReference>
<dbReference type="GO" id="GO:0046872">
    <property type="term" value="F:metal ion binding"/>
    <property type="evidence" value="ECO:0007669"/>
    <property type="project" value="UniProtKB-KW"/>
</dbReference>
<dbReference type="GO" id="GO:0070006">
    <property type="term" value="F:metalloaminopeptidase activity"/>
    <property type="evidence" value="ECO:0007669"/>
    <property type="project" value="InterPro"/>
</dbReference>
<dbReference type="GO" id="GO:0006508">
    <property type="term" value="P:proteolysis"/>
    <property type="evidence" value="ECO:0007669"/>
    <property type="project" value="UniProtKB-KW"/>
</dbReference>
<dbReference type="CDD" id="cd01085">
    <property type="entry name" value="APP"/>
    <property type="match status" value="1"/>
</dbReference>
<dbReference type="FunFam" id="3.40.350.10:FF:000010">
    <property type="entry name" value="Probable Xaa-Pro aminopeptidase P"/>
    <property type="match status" value="1"/>
</dbReference>
<dbReference type="FunFam" id="3.90.230.10:FF:000007">
    <property type="entry name" value="Xaa-Pro aminopeptidase P"/>
    <property type="match status" value="1"/>
</dbReference>
<dbReference type="Gene3D" id="3.90.230.10">
    <property type="entry name" value="Creatinase/methionine aminopeptidase superfamily"/>
    <property type="match status" value="1"/>
</dbReference>
<dbReference type="Gene3D" id="3.40.350.10">
    <property type="entry name" value="Creatinase/prolidase N-terminal domain"/>
    <property type="match status" value="2"/>
</dbReference>
<dbReference type="InterPro" id="IPR029149">
    <property type="entry name" value="Creatin/AminoP/Spt16_N"/>
</dbReference>
<dbReference type="InterPro" id="IPR036005">
    <property type="entry name" value="Creatinase/aminopeptidase-like"/>
</dbReference>
<dbReference type="InterPro" id="IPR000587">
    <property type="entry name" value="Creatinase_N"/>
</dbReference>
<dbReference type="InterPro" id="IPR000994">
    <property type="entry name" value="Pept_M24"/>
</dbReference>
<dbReference type="InterPro" id="IPR033740">
    <property type="entry name" value="Pept_M24B"/>
</dbReference>
<dbReference type="InterPro" id="IPR032416">
    <property type="entry name" value="Peptidase_M24_C"/>
</dbReference>
<dbReference type="InterPro" id="IPR001131">
    <property type="entry name" value="Peptidase_M24B_aminopep-P_CS"/>
</dbReference>
<dbReference type="InterPro" id="IPR050422">
    <property type="entry name" value="X-Pro_aminopeptidase_P"/>
</dbReference>
<dbReference type="PANTHER" id="PTHR43763">
    <property type="entry name" value="XAA-PRO AMINOPEPTIDASE 1"/>
    <property type="match status" value="1"/>
</dbReference>
<dbReference type="PANTHER" id="PTHR43763:SF6">
    <property type="entry name" value="XAA-PRO AMINOPEPTIDASE 1"/>
    <property type="match status" value="1"/>
</dbReference>
<dbReference type="Pfam" id="PF01321">
    <property type="entry name" value="Creatinase_N"/>
    <property type="match status" value="1"/>
</dbReference>
<dbReference type="Pfam" id="PF16189">
    <property type="entry name" value="Creatinase_N_2"/>
    <property type="match status" value="1"/>
</dbReference>
<dbReference type="Pfam" id="PF00557">
    <property type="entry name" value="Peptidase_M24"/>
    <property type="match status" value="1"/>
</dbReference>
<dbReference type="Pfam" id="PF16188">
    <property type="entry name" value="Peptidase_M24_C"/>
    <property type="match status" value="1"/>
</dbReference>
<dbReference type="SUPFAM" id="SSF55920">
    <property type="entry name" value="Creatinase/aminopeptidase"/>
    <property type="match status" value="1"/>
</dbReference>
<dbReference type="SUPFAM" id="SSF53092">
    <property type="entry name" value="Creatinase/prolidase N-terminal domain"/>
    <property type="match status" value="1"/>
</dbReference>
<dbReference type="PROSITE" id="PS00491">
    <property type="entry name" value="PROLINE_PEPTIDASE"/>
    <property type="match status" value="1"/>
</dbReference>
<evidence type="ECO:0000250" key="1"/>
<evidence type="ECO:0000305" key="2"/>
<accession>E4USI8</accession>
<protein>
    <recommendedName>
        <fullName>Probable Xaa-Pro aminopeptidase P</fullName>
        <shortName>AMPP</shortName>
        <shortName>Aminopeptidase P</shortName>
        <ecNumber>3.4.11.9</ecNumber>
    </recommendedName>
    <alternativeName>
        <fullName>Aminoacylproline aminopeptidase</fullName>
    </alternativeName>
    <alternativeName>
        <fullName>Prolidase</fullName>
    </alternativeName>
</protein>
<gene>
    <name type="primary">AMPP</name>
    <name type="ORF">MGYG_04346</name>
</gene>
<organism>
    <name type="scientific">Arthroderma gypseum (strain ATCC MYA-4604 / CBS 118893)</name>
    <name type="common">Microsporum gypseum</name>
    <dbReference type="NCBI Taxonomy" id="535722"/>
    <lineage>
        <taxon>Eukaryota</taxon>
        <taxon>Fungi</taxon>
        <taxon>Dikarya</taxon>
        <taxon>Ascomycota</taxon>
        <taxon>Pezizomycotina</taxon>
        <taxon>Eurotiomycetes</taxon>
        <taxon>Eurotiomycetidae</taxon>
        <taxon>Onygenales</taxon>
        <taxon>Arthrodermataceae</taxon>
        <taxon>Nannizzia</taxon>
    </lineage>
</organism>
<name>AMPP1_ARTGP</name>
<sequence>MTILRHPLRFLFKPRFLYFQSPSGQSSRPFSTSQILRTALDMPPPPVDTTQRLAKLRELMAQNKVDVYTFISSFTGSAGCAIVSMSKAALSTDGRYFSQAAKQLDSNWTLLKRGVEGVPTWEEWTAEQAENGKVVGVDPSLITAADARKLSQTLKTTGGSLIGIDQNLIDAVWGDERPARPSNQITVQPVERAGKSFEEKVEDLRKELAAKKRSAMVISTLDEIAWLFNLRGSDIPYNPVFFSYAIVTPSVAELYVDENKLSPEARKHLEGKVVLKPYESIFQASKALAESKASASSGSGGKFLLSNKASWSVSLALGGEQNVVEVRSPITDAKAIKNEVELEGFRKCHIRDGAALIEYFAWLENALIKEGAKLDEVDGANKLFEIRKKYDHFVGNSFDTISSTGANGATIHYKPEKSTCAVIDPKAMYLCDSGGQYLDGTTDTTRTLHFGEPTEFQKKAYALVLKGHISIDNAIFPKGTTGYAIDSFARQHLWKEGLDYLHGTGHGVGSFLNVHEGPMGIGSRAQYAEVPLSASNVLSNEPGYYEDGNFGIRLENLVICKEVKTPHKFGDKPFLGFEYITLVPFCQKLLDASLLTEAERKWVNDYHAKVWEKTSPFFEKDELTTNWLKRETQPI</sequence>